<gene>
    <name type="primary">yciY</name>
    <name type="ordered locus">b4595</name>
</gene>
<proteinExistence type="inferred from homology"/>
<keyword id="KW-1185">Reference proteome</keyword>
<comment type="similarity">
    <text evidence="2">Belongs to the YciY family.</text>
</comment>
<protein>
    <recommendedName>
        <fullName>Uncharacterized protein YciY</fullName>
    </recommendedName>
</protein>
<name>YCIY_ECOLI</name>
<feature type="chain" id="PRO_0000311782" description="Uncharacterized protein YciY">
    <location>
        <begin position="1"/>
        <end position="57"/>
    </location>
</feature>
<feature type="region of interest" description="Disordered" evidence="1">
    <location>
        <begin position="1"/>
        <end position="25"/>
    </location>
</feature>
<feature type="compositionally biased region" description="Basic and acidic residues" evidence="1">
    <location>
        <begin position="1"/>
        <end position="10"/>
    </location>
</feature>
<dbReference type="EMBL" id="U00096">
    <property type="protein sequence ID" value="ABP93442.1"/>
    <property type="molecule type" value="Genomic_DNA"/>
</dbReference>
<dbReference type="RefSeq" id="WP_001309467.1">
    <property type="nucleotide sequence ID" value="NZ_STEB01000005.1"/>
</dbReference>
<dbReference type="RefSeq" id="YP_001165316.1">
    <property type="nucleotide sequence ID" value="NC_000913.3"/>
</dbReference>
<dbReference type="STRING" id="511145.b4595"/>
<dbReference type="PaxDb" id="511145-b4595"/>
<dbReference type="EnsemblBacteria" id="ABP93442">
    <property type="protein sequence ID" value="ABP93442"/>
    <property type="gene ID" value="b4595"/>
</dbReference>
<dbReference type="GeneID" id="5061502"/>
<dbReference type="KEGG" id="eco:b4595"/>
<dbReference type="PATRIC" id="fig|83333.113.peg.1262"/>
<dbReference type="eggNOG" id="ENOG50334IP">
    <property type="taxonomic scope" value="Bacteria"/>
</dbReference>
<dbReference type="InParanoid" id="A5A613"/>
<dbReference type="OMA" id="VARWRML"/>
<dbReference type="OrthoDB" id="6466254at2"/>
<dbReference type="BioCyc" id="EcoCyc:MONOMER0-765"/>
<dbReference type="PRO" id="PR:A5A613"/>
<dbReference type="Proteomes" id="UP000000625">
    <property type="component" value="Chromosome"/>
</dbReference>
<dbReference type="InterPro" id="IPR049586">
    <property type="entry name" value="YciY"/>
</dbReference>
<dbReference type="NCBIfam" id="NF033701">
    <property type="entry name" value="yciY_fam"/>
    <property type="match status" value="1"/>
</dbReference>
<sequence>MKRSRTEVGRWRMQRQASRRKSRWLEGQSRRNMRIHSIRKCILNKQRNSLLFAIYNI</sequence>
<reference key="1">
    <citation type="journal article" date="1997" name="Science">
        <title>The complete genome sequence of Escherichia coli K-12.</title>
        <authorList>
            <person name="Blattner F.R."/>
            <person name="Plunkett G. III"/>
            <person name="Bloch C.A."/>
            <person name="Perna N.T."/>
            <person name="Burland V."/>
            <person name="Riley M."/>
            <person name="Collado-Vides J."/>
            <person name="Glasner J.D."/>
            <person name="Rode C.K."/>
            <person name="Mayhew G.F."/>
            <person name="Gregor J."/>
            <person name="Davis N.W."/>
            <person name="Kirkpatrick H.A."/>
            <person name="Goeden M.A."/>
            <person name="Rose D.J."/>
            <person name="Mau B."/>
            <person name="Shao Y."/>
        </authorList>
    </citation>
    <scope>NUCLEOTIDE SEQUENCE [LARGE SCALE GENOMIC DNA]</scope>
    <source>
        <strain>K12 / MG1655 / ATCC 47076</strain>
    </source>
</reference>
<accession>A5A613</accession>
<evidence type="ECO:0000256" key="1">
    <source>
        <dbReference type="SAM" id="MobiDB-lite"/>
    </source>
</evidence>
<evidence type="ECO:0000305" key="2"/>
<organism>
    <name type="scientific">Escherichia coli (strain K12)</name>
    <dbReference type="NCBI Taxonomy" id="83333"/>
    <lineage>
        <taxon>Bacteria</taxon>
        <taxon>Pseudomonadati</taxon>
        <taxon>Pseudomonadota</taxon>
        <taxon>Gammaproteobacteria</taxon>
        <taxon>Enterobacterales</taxon>
        <taxon>Enterobacteriaceae</taxon>
        <taxon>Escherichia</taxon>
    </lineage>
</organism>